<protein>
    <recommendedName>
        <fullName>Lantibiotic nukacin</fullName>
    </recommendedName>
    <alternativeName>
        <fullName>Bacteriocin ISK-1</fullName>
    </alternativeName>
</protein>
<geneLocation type="plasmid">
    <name>pPI-1</name>
</geneLocation>
<keyword id="KW-0002">3D-structure</keyword>
<keyword id="KW-0044">Antibiotic</keyword>
<keyword id="KW-0929">Antimicrobial</keyword>
<keyword id="KW-0078">Bacteriocin</keyword>
<keyword id="KW-0903">Direct protein sequencing</keyword>
<keyword id="KW-0425">Lantibiotic</keyword>
<keyword id="KW-0614">Plasmid</keyword>
<keyword id="KW-0964">Secreted</keyword>
<keyword id="KW-0883">Thioether bond</keyword>
<organism>
    <name type="scientific">Staphylococcus warneri</name>
    <dbReference type="NCBI Taxonomy" id="1292"/>
    <lineage>
        <taxon>Bacteria</taxon>
        <taxon>Bacillati</taxon>
        <taxon>Bacillota</taxon>
        <taxon>Bacilli</taxon>
        <taxon>Bacillales</taxon>
        <taxon>Staphylococcaceae</taxon>
        <taxon>Staphylococcus</taxon>
    </lineage>
</organism>
<gene>
    <name type="primary">nukA</name>
</gene>
<feature type="propeptide" id="PRO_0000307094" evidence="1 4">
    <location>
        <begin position="1"/>
        <end position="30"/>
    </location>
</feature>
<feature type="peptide" id="PRO_0000307095" description="Lantibiotic nukacin">
    <location>
        <begin position="31"/>
        <end position="57"/>
    </location>
</feature>
<feature type="modified residue" description="2,3-didehydrobutyrine" evidence="6">
    <location>
        <position position="54"/>
    </location>
</feature>
<feature type="cross-link" description="Beta-methyllanthionine (Thr-Cys)" evidence="6">
    <location>
        <begin position="39"/>
        <end position="44"/>
    </location>
</feature>
<feature type="cross-link" description="Lanthionine (Ser-Cys)" evidence="6">
    <location>
        <begin position="41"/>
        <end position="55"/>
    </location>
</feature>
<feature type="cross-link" description="Lanthionine (Ser-Cys)" evidence="6">
    <location>
        <begin position="48"/>
        <end position="56"/>
    </location>
</feature>
<feature type="strand" evidence="7">
    <location>
        <begin position="36"/>
        <end position="38"/>
    </location>
</feature>
<feature type="turn" evidence="7">
    <location>
        <begin position="41"/>
        <end position="43"/>
    </location>
</feature>
<reference key="1">
    <citation type="journal article" date="2000" name="Biosci. Biotechnol. Biochem.">
        <title>A novel lantibiotic, nukacin ISK-1, of Staphylococcus warneri ISK-1: cloning of the structural gene and identification of the structure.</title>
        <authorList>
            <person name="Sashihara T."/>
            <person name="Kimura H."/>
            <person name="Higuchi T."/>
            <person name="Adachi A."/>
            <person name="Matsusaki H."/>
            <person name="Sonomoto K."/>
            <person name="Ishizaki A."/>
        </authorList>
    </citation>
    <scope>NUCLEOTIDE SEQUENCE [GENOMIC DNA]</scope>
    <scope>PROTEIN SEQUENCE OF 31-57</scope>
    <scope>DEHYDRATION AT THR-54</scope>
    <scope>LANTHIONINE CROSS-LINKS</scope>
    <source>
        <strain>ISK-1</strain>
    </source>
</reference>
<reference key="2">
    <citation type="journal article" date="2004" name="Biosci. Biotechnol. Biochem.">
        <title>Characterization of a gene cluster of Staphylococcus warneri ISK-1 encoding the biosynthesis of and immunity to the lantibiotic, nukacin ISK-1.</title>
        <authorList>
            <person name="Aso Y."/>
            <person name="Sashihara T."/>
            <person name="Nagao J."/>
            <person name="Kanemasa Y."/>
            <person name="Koga H."/>
            <person name="Hashimoto T."/>
            <person name="Higuchi T."/>
            <person name="Adachi A."/>
            <person name="Nomiyama H."/>
            <person name="Ishizaki A."/>
            <person name="Nakayama J."/>
            <person name="Sonomoto K."/>
        </authorList>
    </citation>
    <scope>NUCLEOTIDE SEQUENCE [GENOMIC DNA]</scope>
    <source>
        <strain>ISK-1</strain>
    </source>
</reference>
<reference key="3">
    <citation type="journal article" date="2005" name="Plasmid">
        <title>Description of complete DNA sequence of two plasmids from the nukacin ISK-1 producer, Staphylococcus warneri ISK-1.</title>
        <authorList>
            <person name="Aso Y."/>
            <person name="Koga H."/>
            <person name="Sashihara T."/>
            <person name="Nagao J."/>
            <person name="Kanemasa Y."/>
            <person name="Nakayama J."/>
            <person name="Sonomoto K."/>
        </authorList>
    </citation>
    <scope>NUCLEOTIDE SEQUENCE [GENOMIC DNA]</scope>
    <source>
        <strain>ISK-1</strain>
    </source>
</reference>
<reference key="4">
    <citation type="journal article" date="1998" name="Biosci. Biotechnol. Biochem.">
        <title>Purification and partial identification of bacteriocin ISK-1, a new lantibiotic produced by Pediococcus sp. ISK-1.</title>
        <authorList>
            <person name="Kimura H."/>
            <person name="Matsusaki H."/>
            <person name="Sashihara T."/>
            <person name="Sonomoto K."/>
            <person name="Ishizaki A."/>
        </authorList>
    </citation>
    <scope>PROTEIN SEQUENCE OF 31-37</scope>
    <scope>AMINO-ACID COMPOSITION</scope>
    <scope>FUNCTION</scope>
    <scope>SUBCELLULAR LOCATION</scope>
    <scope>IDENTIFICATION BY MASS SPECTROMETRY</scope>
    <source>
        <strain>ISK-1</strain>
    </source>
</reference>
<reference key="5">
    <citation type="journal article" date="2004" name="J. Biosci. Bioeng.">
        <title>Heterologous expression and functional analysis of the gene cluster for the biosynthesis of and immunity to the lantibiotic, nukacin ISK-1.</title>
        <authorList>
            <person name="Aso Y."/>
            <person name="Nagao J."/>
            <person name="Koga H."/>
            <person name="Okuda K."/>
            <person name="Kanemasa Y."/>
            <person name="Sashihara T."/>
            <person name="Nakayama J."/>
            <person name="Sonomoto K."/>
        </authorList>
    </citation>
    <scope>FUNCTION</scope>
    <scope>SUBCELLULAR LOCATION</scope>
    <scope>MASS SPECTROMETRY</scope>
    <source>
        <strain>ISK-1</strain>
    </source>
</reference>
<reference key="6">
    <citation type="journal article" date="2006" name="Appl. Environ. Microbiol.">
        <title>Lysine-oriented charges trigger the membrane binding and activity of nukacin ISK-1.</title>
        <authorList>
            <person name="Asaduzzaman S.M."/>
            <person name="Nagao J."/>
            <person name="Aso Y."/>
            <person name="Nakayama J."/>
            <person name="Sonomoto K."/>
        </authorList>
    </citation>
    <scope>FUNCTION</scope>
    <source>
        <strain>ISK-1</strain>
    </source>
</reference>
<dbReference type="EMBL" id="AB034941">
    <property type="protein sequence ID" value="BAA95674.1"/>
    <property type="molecule type" value="Genomic_DNA"/>
</dbReference>
<dbReference type="EMBL" id="AB121757">
    <property type="protein sequence ID" value="BAC98759.1"/>
    <property type="molecule type" value="Genomic_DNA"/>
</dbReference>
<dbReference type="EMBL" id="AB125341">
    <property type="protein sequence ID" value="BAD01007.1"/>
    <property type="molecule type" value="Genomic_DNA"/>
</dbReference>
<dbReference type="RefSeq" id="NP_940772.1">
    <property type="nucleotide sequence ID" value="NC_005207.3"/>
</dbReference>
<dbReference type="RefSeq" id="WP_011152951.1">
    <property type="nucleotide sequence ID" value="NZ_VDOJ01000018.1"/>
</dbReference>
<dbReference type="PDB" id="5Z5Q">
    <property type="method" value="NMR"/>
    <property type="chains" value="A=31-57"/>
</dbReference>
<dbReference type="PDB" id="5Z5R">
    <property type="method" value="NMR"/>
    <property type="chains" value="A=31-57"/>
</dbReference>
<dbReference type="PDBsum" id="5Z5Q"/>
<dbReference type="PDBsum" id="5Z5R"/>
<dbReference type="BMRB" id="Q9KWM4"/>
<dbReference type="SMR" id="Q9KWM4"/>
<dbReference type="TCDB" id="1.C.21.1.5">
    <property type="family name" value="the lacticin 481 (lacticin 481) family"/>
</dbReference>
<dbReference type="GO" id="GO:0005576">
    <property type="term" value="C:extracellular region"/>
    <property type="evidence" value="ECO:0007669"/>
    <property type="project" value="UniProtKB-SubCell"/>
</dbReference>
<dbReference type="GO" id="GO:0005102">
    <property type="term" value="F:signaling receptor binding"/>
    <property type="evidence" value="ECO:0007669"/>
    <property type="project" value="UniProtKB-KW"/>
</dbReference>
<dbReference type="GO" id="GO:0042742">
    <property type="term" value="P:defense response to bacterium"/>
    <property type="evidence" value="ECO:0007669"/>
    <property type="project" value="UniProtKB-KW"/>
</dbReference>
<dbReference type="GO" id="GO:0031640">
    <property type="term" value="P:killing of cells of another organism"/>
    <property type="evidence" value="ECO:0007669"/>
    <property type="project" value="UniProtKB-KW"/>
</dbReference>
<dbReference type="InterPro" id="IPR007682">
    <property type="entry name" value="Lantibiotic_typ-A_Lactobact"/>
</dbReference>
<dbReference type="NCBIfam" id="NF040664">
    <property type="entry name" value="HEC_x9_TCC_lant"/>
    <property type="match status" value="1"/>
</dbReference>
<dbReference type="Pfam" id="PF04604">
    <property type="entry name" value="L_biotic_typeA"/>
    <property type="match status" value="1"/>
</dbReference>
<name>LANNA_STAWA</name>
<accession>Q9KWM4</accession>
<sequence>MENSKVMKDIEVANLLEEVQEDELNEVLGAKKKSGVIPTVSHDCHMNSFQFVFTCCS</sequence>
<proteinExistence type="evidence at protein level"/>
<comment type="function">
    <text evidence="2 3 4">Lanthionine-containing peptide antibiotic (lantibiotic) active on Gram-positive bacteria, such as Lactobacillus sakei, Leuconostoc mesenteroides and Pediococcus pentosaceus. The bactericidal activity of lantibiotics is based on depolarization of energized bacterial cytoplasmic membranes, initiated by the formation of aqueous transmembrane pores.</text>
</comment>
<comment type="subcellular location">
    <subcellularLocation>
        <location evidence="2 4">Secreted</location>
    </subcellularLocation>
    <text>Through the specific ABC transporter NukT.</text>
</comment>
<comment type="PTM">
    <text>Maturation of lantibiotics involves the enzymatic conversion of Thr, and Ser into dehydrated AA and the formation of thioether bonds with cysteine. This is followed by membrane translocation and cleavage of the modified precursor.</text>
</comment>
<comment type="mass spectrometry"/>
<comment type="similarity">
    <text evidence="5">Belongs to the type A lantibiotic family.</text>
</comment>
<comment type="caution">
    <text evidence="5">It is uncertain whether Met-1 or Met-7 is the initiator.</text>
</comment>
<evidence type="ECO:0000269" key="1">
    <source>
    </source>
</evidence>
<evidence type="ECO:0000269" key="2">
    <source>
    </source>
</evidence>
<evidence type="ECO:0000269" key="3">
    <source>
    </source>
</evidence>
<evidence type="ECO:0000269" key="4">
    <source ref="4"/>
</evidence>
<evidence type="ECO:0000305" key="5"/>
<evidence type="ECO:0000305" key="6">
    <source>
    </source>
</evidence>
<evidence type="ECO:0007829" key="7">
    <source>
        <dbReference type="PDB" id="5Z5Q"/>
    </source>
</evidence>